<accession>Q6DDK5</accession>
<keyword id="KW-0256">Endoplasmic reticulum</keyword>
<keyword id="KW-0276">Fatty acid metabolism</keyword>
<keyword id="KW-0443">Lipid metabolism</keyword>
<keyword id="KW-0456">Lyase</keyword>
<keyword id="KW-0460">Magnesium</keyword>
<keyword id="KW-0472">Membrane</keyword>
<keyword id="KW-0479">Metal-binding</keyword>
<keyword id="KW-1185">Reference proteome</keyword>
<keyword id="KW-0786">Thiamine pyrophosphate</keyword>
<keyword id="KW-0812">Transmembrane</keyword>
<keyword id="KW-1133">Transmembrane helix</keyword>
<organism>
    <name type="scientific">Xenopus laevis</name>
    <name type="common">African clawed frog</name>
    <dbReference type="NCBI Taxonomy" id="8355"/>
    <lineage>
        <taxon>Eukaryota</taxon>
        <taxon>Metazoa</taxon>
        <taxon>Chordata</taxon>
        <taxon>Craniata</taxon>
        <taxon>Vertebrata</taxon>
        <taxon>Euteleostomi</taxon>
        <taxon>Amphibia</taxon>
        <taxon>Batrachia</taxon>
        <taxon>Anura</taxon>
        <taxon>Pipoidea</taxon>
        <taxon>Pipidae</taxon>
        <taxon>Xenopodinae</taxon>
        <taxon>Xenopus</taxon>
        <taxon>Xenopus</taxon>
    </lineage>
</organism>
<comment type="function">
    <text evidence="2">Endoplasmic reticulum 2-OH acyl-CoA lyase involved in the cleavage (C1 removal) reaction in the fatty acid alpha-oxydation in a thiamine pyrophosphate (TPP)-dependent manner. Involved in the phytosphingosine degradation pathway.</text>
</comment>
<comment type="catalytic activity">
    <reaction evidence="2">
        <text>2-hydroxyoctadecanoyl-CoA = heptadecanal + formyl-CoA</text>
        <dbReference type="Rhea" id="RHEA:55196"/>
        <dbReference type="ChEBI" id="CHEBI:57376"/>
        <dbReference type="ChEBI" id="CHEBI:74116"/>
        <dbReference type="ChEBI" id="CHEBI:138631"/>
    </reaction>
    <physiologicalReaction direction="left-to-right" evidence="2">
        <dbReference type="Rhea" id="RHEA:55197"/>
    </physiologicalReaction>
</comment>
<comment type="catalytic activity">
    <reaction evidence="2">
        <text>(2R)-hydroxyhexadecanoyl-CoA = pentadecanal + formyl-CoA</text>
        <dbReference type="Rhea" id="RHEA:55212"/>
        <dbReference type="ChEBI" id="CHEBI:17302"/>
        <dbReference type="ChEBI" id="CHEBI:57376"/>
        <dbReference type="ChEBI" id="CHEBI:138654"/>
    </reaction>
    <physiologicalReaction direction="left-to-right" evidence="2">
        <dbReference type="Rhea" id="RHEA:55213"/>
    </physiologicalReaction>
</comment>
<comment type="cofactor">
    <cofactor evidence="4">
        <name>Mg(2+)</name>
        <dbReference type="ChEBI" id="CHEBI:18420"/>
    </cofactor>
    <text evidence="4">Binds 1 Mg(2+) ion per subunit.</text>
</comment>
<comment type="cofactor">
    <cofactor evidence="2">
        <name>thiamine diphosphate</name>
        <dbReference type="ChEBI" id="CHEBI:58937"/>
    </cofactor>
    <text evidence="1">Binds 1 thiamine pyrophosphate per subunit.</text>
</comment>
<comment type="subcellular location">
    <subcellularLocation>
        <location evidence="2">Endoplasmic reticulum membrane</location>
        <topology evidence="5">Single-pass membrane protein</topology>
    </subcellularLocation>
</comment>
<comment type="similarity">
    <text evidence="6">Belongs to the TPP enzyme family.</text>
</comment>
<reference key="1">
    <citation type="submission" date="2004-07" db="EMBL/GenBank/DDBJ databases">
        <authorList>
            <consortium name="NIH - Xenopus Gene Collection (XGC) project"/>
        </authorList>
    </citation>
    <scope>NUCLEOTIDE SEQUENCE [LARGE SCALE MRNA]</scope>
    <source>
        <tissue>Brain</tissue>
    </source>
</reference>
<feature type="chain" id="PRO_0000314828" description="2-hydroxyacyl-CoA lyase 2">
    <location>
        <begin position="1"/>
        <end position="649"/>
    </location>
</feature>
<feature type="transmembrane region" description="Helical" evidence="5">
    <location>
        <begin position="2"/>
        <end position="21"/>
    </location>
</feature>
<feature type="region of interest" description="Thiamine pyrophosphate binding" evidence="3">
    <location>
        <begin position="474"/>
        <end position="554"/>
    </location>
</feature>
<feature type="binding site" evidence="3">
    <location>
        <position position="84"/>
    </location>
    <ligand>
        <name>thiamine diphosphate</name>
        <dbReference type="ChEBI" id="CHEBI:58937"/>
    </ligand>
</feature>
<feature type="binding site" evidence="3">
    <location>
        <position position="525"/>
    </location>
    <ligand>
        <name>Mg(2+)</name>
        <dbReference type="ChEBI" id="CHEBI:18420"/>
    </ligand>
</feature>
<feature type="binding site" evidence="3">
    <location>
        <position position="551"/>
    </location>
    <ligand>
        <name>Mg(2+)</name>
        <dbReference type="ChEBI" id="CHEBI:18420"/>
    </ligand>
</feature>
<protein>
    <recommendedName>
        <fullName>2-hydroxyacyl-CoA lyase 2</fullName>
        <ecNumber evidence="2">4.1.2.-</ecNumber>
    </recommendedName>
    <alternativeName>
        <fullName>Acetolactate synthase-like protein</fullName>
    </alternativeName>
    <alternativeName>
        <fullName>IlvB-like protein</fullName>
    </alternativeName>
</protein>
<gene>
    <name type="primary">ilvbl</name>
    <name evidence="2" type="synonym">hacl2</name>
</gene>
<sequence>MFHLIPFVVAFLLVFLTWFLIKKLRKVIIFELDQNSKHFGGELVADVLKAHDVRFLFTLCGGHISPILVAAERQNIRVIDVRHEASAVFAADAVSRLSGTVGVAAVTAGPGLTNTVTAVKNAQMAESPIVLLAGAAAGLLRGRGSLQDIDQLSLFRPLCKWSGRVNCVKDIVPMLCKAFYLARSGTPGPVLVEFPIDTLYPYSLVRQHLRISDNPQSWRQRFTNWYLRFYLFRLFANGFRIQPCLPGQVPTQIPVEIPSIPWPSTKSIDQLVWLLSQAKRPVIVVSSQALLPPVPATQTAEHVKSLRIPVYLTGMARGLLGRHHPCVFRHARRAALRVADLIILAGSVCDFRMDYGRVLNRKAKIVIINRDKKQLYLNSDIFWRPYLAIRGDVGTALKELSISLNDRFPCLSDFRCPTEWVGELLAREHHRDEEIRQSSLTQPAERINPLSVLWQLEHNGLTDQESIIVADGGDFVGSAAYILRPRGPLSWLDPGPFGTLGVGGGFALGAKLCRPQAHVWVVYGDGSAGYSLAEWDTMARHKAPAIGVIGNDACWSQIARDQLGLFGSNVACGLQSTRYDLVGAAYAGADPLNSTLSVEDSGAFLVTEKNLDNLSDYMAHARELSDRGLPSIINCNIAASGFREGSISL</sequence>
<evidence type="ECO:0000250" key="1"/>
<evidence type="ECO:0000250" key="2">
    <source>
        <dbReference type="UniProtKB" id="A1L0T0"/>
    </source>
</evidence>
<evidence type="ECO:0000250" key="3">
    <source>
        <dbReference type="UniProtKB" id="P40149"/>
    </source>
</evidence>
<evidence type="ECO:0000250" key="4">
    <source>
        <dbReference type="UniProtKB" id="Q8CHM7"/>
    </source>
</evidence>
<evidence type="ECO:0000255" key="5"/>
<evidence type="ECO:0000305" key="6"/>
<dbReference type="EC" id="4.1.2.-" evidence="2"/>
<dbReference type="EMBL" id="BC077553">
    <property type="protein sequence ID" value="AAH77553.1"/>
    <property type="molecule type" value="mRNA"/>
</dbReference>
<dbReference type="RefSeq" id="NP_001086850.1">
    <property type="nucleotide sequence ID" value="NM_001093381.1"/>
</dbReference>
<dbReference type="SMR" id="Q6DDK5"/>
<dbReference type="DNASU" id="446685"/>
<dbReference type="GeneID" id="446685"/>
<dbReference type="CTD" id="10994"/>
<dbReference type="Xenbase" id="XB-GENE-6255656">
    <property type="gene designation" value="ilvbl.L"/>
</dbReference>
<dbReference type="Proteomes" id="UP000186698">
    <property type="component" value="Unplaced"/>
</dbReference>
<dbReference type="GO" id="GO:0005948">
    <property type="term" value="C:acetolactate synthase complex"/>
    <property type="evidence" value="ECO:0000318"/>
    <property type="project" value="GO_Central"/>
</dbReference>
<dbReference type="GO" id="GO:0005789">
    <property type="term" value="C:endoplasmic reticulum membrane"/>
    <property type="evidence" value="ECO:0000250"/>
    <property type="project" value="UniProtKB"/>
</dbReference>
<dbReference type="GO" id="GO:0003984">
    <property type="term" value="F:acetolactate synthase activity"/>
    <property type="evidence" value="ECO:0000318"/>
    <property type="project" value="GO_Central"/>
</dbReference>
<dbReference type="GO" id="GO:0050660">
    <property type="term" value="F:flavin adenine dinucleotide binding"/>
    <property type="evidence" value="ECO:0000318"/>
    <property type="project" value="GO_Central"/>
</dbReference>
<dbReference type="GO" id="GO:0016829">
    <property type="term" value="F:lyase activity"/>
    <property type="evidence" value="ECO:0007669"/>
    <property type="project" value="UniProtKB-KW"/>
</dbReference>
<dbReference type="GO" id="GO:0000287">
    <property type="term" value="F:magnesium ion binding"/>
    <property type="evidence" value="ECO:0007669"/>
    <property type="project" value="InterPro"/>
</dbReference>
<dbReference type="GO" id="GO:0030976">
    <property type="term" value="F:thiamine pyrophosphate binding"/>
    <property type="evidence" value="ECO:0007669"/>
    <property type="project" value="InterPro"/>
</dbReference>
<dbReference type="GO" id="GO:0001561">
    <property type="term" value="P:fatty acid alpha-oxidation"/>
    <property type="evidence" value="ECO:0000250"/>
    <property type="project" value="UniProtKB"/>
</dbReference>
<dbReference type="GO" id="GO:0009097">
    <property type="term" value="P:isoleucine biosynthetic process"/>
    <property type="evidence" value="ECO:0000318"/>
    <property type="project" value="GO_Central"/>
</dbReference>
<dbReference type="GO" id="GO:0009099">
    <property type="term" value="P:L-valine biosynthetic process"/>
    <property type="evidence" value="ECO:0000318"/>
    <property type="project" value="GO_Central"/>
</dbReference>
<dbReference type="CDD" id="cd02004">
    <property type="entry name" value="TPP_BZL_OCoD_HPCL"/>
    <property type="match status" value="1"/>
</dbReference>
<dbReference type="CDD" id="cd07035">
    <property type="entry name" value="TPP_PYR_POX_like"/>
    <property type="match status" value="1"/>
</dbReference>
<dbReference type="FunFam" id="3.40.50.970:FF:000007">
    <property type="entry name" value="Acetolactate synthase"/>
    <property type="match status" value="1"/>
</dbReference>
<dbReference type="Gene3D" id="3.40.50.970">
    <property type="match status" value="2"/>
</dbReference>
<dbReference type="Gene3D" id="3.40.50.1220">
    <property type="entry name" value="TPP-binding domain"/>
    <property type="match status" value="1"/>
</dbReference>
<dbReference type="InterPro" id="IPR029035">
    <property type="entry name" value="DHS-like_NAD/FAD-binding_dom"/>
</dbReference>
<dbReference type="InterPro" id="IPR029061">
    <property type="entry name" value="THDP-binding"/>
</dbReference>
<dbReference type="InterPro" id="IPR012000">
    <property type="entry name" value="Thiamin_PyroP_enz_cen_dom"/>
</dbReference>
<dbReference type="InterPro" id="IPR012001">
    <property type="entry name" value="Thiamin_PyroP_enz_TPP-bd_dom"/>
</dbReference>
<dbReference type="InterPro" id="IPR000399">
    <property type="entry name" value="TPP-bd_CS"/>
</dbReference>
<dbReference type="InterPro" id="IPR045229">
    <property type="entry name" value="TPP_enz"/>
</dbReference>
<dbReference type="InterPro" id="IPR011766">
    <property type="entry name" value="TPP_enzyme_TPP-bd"/>
</dbReference>
<dbReference type="PANTHER" id="PTHR18968:SF166">
    <property type="entry name" value="2-HYDROXYACYL-COA LYASE 2"/>
    <property type="match status" value="1"/>
</dbReference>
<dbReference type="PANTHER" id="PTHR18968">
    <property type="entry name" value="THIAMINE PYROPHOSPHATE ENZYMES"/>
    <property type="match status" value="1"/>
</dbReference>
<dbReference type="Pfam" id="PF02775">
    <property type="entry name" value="TPP_enzyme_C"/>
    <property type="match status" value="1"/>
</dbReference>
<dbReference type="Pfam" id="PF00205">
    <property type="entry name" value="TPP_enzyme_M"/>
    <property type="match status" value="1"/>
</dbReference>
<dbReference type="Pfam" id="PF02776">
    <property type="entry name" value="TPP_enzyme_N"/>
    <property type="match status" value="1"/>
</dbReference>
<dbReference type="SUPFAM" id="SSF52467">
    <property type="entry name" value="DHS-like NAD/FAD-binding domain"/>
    <property type="match status" value="1"/>
</dbReference>
<dbReference type="SUPFAM" id="SSF52518">
    <property type="entry name" value="Thiamin diphosphate-binding fold (THDP-binding)"/>
    <property type="match status" value="2"/>
</dbReference>
<dbReference type="PROSITE" id="PS00187">
    <property type="entry name" value="TPP_ENZYMES"/>
    <property type="match status" value="1"/>
</dbReference>
<name>HACL2_XENLA</name>
<proteinExistence type="evidence at transcript level"/>